<gene>
    <name type="primary">FLOT1</name>
</gene>
<organism>
    <name type="scientific">Pan troglodytes</name>
    <name type="common">Chimpanzee</name>
    <dbReference type="NCBI Taxonomy" id="9598"/>
    <lineage>
        <taxon>Eukaryota</taxon>
        <taxon>Metazoa</taxon>
        <taxon>Chordata</taxon>
        <taxon>Craniata</taxon>
        <taxon>Vertebrata</taxon>
        <taxon>Euteleostomi</taxon>
        <taxon>Mammalia</taxon>
        <taxon>Eutheria</taxon>
        <taxon>Euarchontoglires</taxon>
        <taxon>Primates</taxon>
        <taxon>Haplorrhini</taxon>
        <taxon>Catarrhini</taxon>
        <taxon>Hominidae</taxon>
        <taxon>Pan</taxon>
    </lineage>
</organism>
<reference key="1">
    <citation type="journal article" date="2003" name="Proc. Natl. Acad. Sci. U.S.A.">
        <title>Comparative sequencing of human and chimpanzee MHC class I regions unveils insertions/deletions as the major path to genomic divergence.</title>
        <authorList>
            <person name="Anzai T."/>
            <person name="Shiina T."/>
            <person name="Kimura N."/>
            <person name="Yanagiya K."/>
            <person name="Kohara S."/>
            <person name="Shigenari A."/>
            <person name="Yamagata T."/>
            <person name="Kulski J.K."/>
            <person name="Naruse T.K."/>
            <person name="Fujimori Y."/>
            <person name="Fukuzumi Y."/>
            <person name="Yamazaki M."/>
            <person name="Tashiro H."/>
            <person name="Iwamoto C."/>
            <person name="Umehara Y."/>
            <person name="Imanishi T."/>
            <person name="Meyer A."/>
            <person name="Ikeo K."/>
            <person name="Gojobori T."/>
            <person name="Bahram S."/>
            <person name="Inoko H."/>
        </authorList>
    </citation>
    <scope>NUCLEOTIDE SEQUENCE [LARGE SCALE GENOMIC DNA]</scope>
</reference>
<reference key="2">
    <citation type="journal article" date="2006" name="Genetics">
        <title>Rapid evolution of major histocompatibility complex class I genes in primates generates new disease alleles in humans via hitchhiking diversity.</title>
        <authorList>
            <person name="Shiina T."/>
            <person name="Ota M."/>
            <person name="Shimizu S."/>
            <person name="Katsuyama Y."/>
            <person name="Hashimoto N."/>
            <person name="Takasu M."/>
            <person name="Anzai T."/>
            <person name="Kulski J.K."/>
            <person name="Kikkawa E."/>
            <person name="Naruse T."/>
            <person name="Kimura N."/>
            <person name="Yanagiya K."/>
            <person name="Watanabe A."/>
            <person name="Hosomichi K."/>
            <person name="Kohara S."/>
            <person name="Iwamoto C."/>
            <person name="Umehara Y."/>
            <person name="Meyer A."/>
            <person name="Wanner V."/>
            <person name="Sano K."/>
            <person name="Macquin C."/>
            <person name="Ikeo K."/>
            <person name="Tokunaga K."/>
            <person name="Gojobori T."/>
            <person name="Inoko H."/>
            <person name="Bahram S."/>
        </authorList>
    </citation>
    <scope>NUCLEOTIDE SEQUENCE [LARGE SCALE GENOMIC DNA]</scope>
</reference>
<comment type="function">
    <text evidence="1">May act as a scaffolding protein within caveolar membranes, functionally participating in formation of caveolae or caveolae-like vesicles.</text>
</comment>
<comment type="subunit">
    <text evidence="1">Heterooligomeric complex of flotillin-1 and flotillin-2 and caveolin-1 and caveolin-2. Interacts with ECPAS.</text>
</comment>
<comment type="subcellular location">
    <subcellularLocation>
        <location evidence="3">Cell membrane</location>
        <topology evidence="3">Peripheral membrane protein</topology>
    </subcellularLocation>
    <subcellularLocation>
        <location evidence="3">Endosome</location>
    </subcellularLocation>
    <subcellularLocation>
        <location evidence="2">Membrane</location>
        <location evidence="2">Caveola</location>
        <topology evidence="2">Peripheral membrane protein</topology>
    </subcellularLocation>
    <subcellularLocation>
        <location evidence="3">Melanosome</location>
    </subcellularLocation>
    <subcellularLocation>
        <location evidence="3">Membrane raft</location>
    </subcellularLocation>
    <text evidence="2 3">Identified by mass spectrometry in melanosome fractions from stage I to stage IV. Membrane-associated protein of caveola.</text>
</comment>
<comment type="similarity">
    <text evidence="4">Belongs to the band 7/mec-2 family. Flotillin subfamily.</text>
</comment>
<protein>
    <recommendedName>
        <fullName>Flotillin-1</fullName>
    </recommendedName>
</protein>
<evidence type="ECO:0000250" key="1"/>
<evidence type="ECO:0000250" key="2">
    <source>
        <dbReference type="UniProtKB" id="O08917"/>
    </source>
</evidence>
<evidence type="ECO:0000250" key="3">
    <source>
        <dbReference type="UniProtKB" id="O75955"/>
    </source>
</evidence>
<evidence type="ECO:0000305" key="4"/>
<keyword id="KW-1003">Cell membrane</keyword>
<keyword id="KW-0967">Endosome</keyword>
<keyword id="KW-0472">Membrane</keyword>
<keyword id="KW-0597">Phosphoprotein</keyword>
<keyword id="KW-1185">Reference proteome</keyword>
<feature type="chain" id="PRO_0000094046" description="Flotillin-1">
    <location>
        <begin position="1"/>
        <end position="427"/>
    </location>
</feature>
<feature type="modified residue" description="Phosphoserine" evidence="3">
    <location>
        <position position="19"/>
    </location>
</feature>
<feature type="modified residue" description="Phosphoserine" evidence="3">
    <location>
        <position position="163"/>
    </location>
</feature>
<feature type="modified residue" description="Phosphoserine" evidence="3">
    <location>
        <position position="385"/>
    </location>
</feature>
<feature type="modified residue" description="Phosphothreonine" evidence="3">
    <location>
        <position position="387"/>
    </location>
</feature>
<accession>Q7YR41</accession>
<accession>Q1XI00</accession>
<dbReference type="EMBL" id="BA000041">
    <property type="protein sequence ID" value="BAC78174.1"/>
    <property type="molecule type" value="Genomic_DNA"/>
</dbReference>
<dbReference type="EMBL" id="AB210163">
    <property type="protein sequence ID" value="BAE92768.1"/>
    <property type="molecule type" value="Genomic_DNA"/>
</dbReference>
<dbReference type="EMBL" id="AB210164">
    <property type="protein sequence ID" value="BAE92770.1"/>
    <property type="molecule type" value="Genomic_DNA"/>
</dbReference>
<dbReference type="RefSeq" id="NP_001035840.1">
    <property type="nucleotide sequence ID" value="NM_001042381.1"/>
</dbReference>
<dbReference type="RefSeq" id="XP_009449135.1">
    <property type="nucleotide sequence ID" value="XM_009450860.4"/>
</dbReference>
<dbReference type="SMR" id="Q7YR41"/>
<dbReference type="FunCoup" id="Q7YR41">
    <property type="interactions" value="1235"/>
</dbReference>
<dbReference type="STRING" id="9598.ENSPTRP00000030607"/>
<dbReference type="PaxDb" id="9598-ENSPTRP00000030607"/>
<dbReference type="Ensembl" id="ENSPTRT00000033127.4">
    <property type="protein sequence ID" value="ENSPTRP00000030607.3"/>
    <property type="gene ID" value="ENSPTRG00000017940.5"/>
</dbReference>
<dbReference type="GeneID" id="471961"/>
<dbReference type="KEGG" id="ptr:471961"/>
<dbReference type="CTD" id="10211"/>
<dbReference type="VGNC" id="VGNC:11080">
    <property type="gene designation" value="FLOT1"/>
</dbReference>
<dbReference type="eggNOG" id="KOG2668">
    <property type="taxonomic scope" value="Eukaryota"/>
</dbReference>
<dbReference type="GeneTree" id="ENSGT00560000077232"/>
<dbReference type="HOGENOM" id="CLU_038134_1_0_1"/>
<dbReference type="InParanoid" id="Q7YR41"/>
<dbReference type="OMA" id="AFQIQDI"/>
<dbReference type="OrthoDB" id="13253at9604"/>
<dbReference type="TreeFam" id="TF324879"/>
<dbReference type="Proteomes" id="UP000002277">
    <property type="component" value="Chromosome 6"/>
</dbReference>
<dbReference type="Bgee" id="ENSPTRG00000017940">
    <property type="expression patterns" value="Expressed in Brodmann (1909) area 10 and 20 other cell types or tissues"/>
</dbReference>
<dbReference type="GO" id="GO:0005912">
    <property type="term" value="C:adherens junction"/>
    <property type="evidence" value="ECO:0007669"/>
    <property type="project" value="Ensembl"/>
</dbReference>
<dbReference type="GO" id="GO:0016323">
    <property type="term" value="C:basolateral plasma membrane"/>
    <property type="evidence" value="ECO:0007669"/>
    <property type="project" value="Ensembl"/>
</dbReference>
<dbReference type="GO" id="GO:0044291">
    <property type="term" value="C:cell-cell contact zone"/>
    <property type="evidence" value="ECO:0007669"/>
    <property type="project" value="Ensembl"/>
</dbReference>
<dbReference type="GO" id="GO:0034451">
    <property type="term" value="C:centriolar satellite"/>
    <property type="evidence" value="ECO:0007669"/>
    <property type="project" value="Ensembl"/>
</dbReference>
<dbReference type="GO" id="GO:0008180">
    <property type="term" value="C:COP9 signalosome"/>
    <property type="evidence" value="ECO:0007669"/>
    <property type="project" value="Ensembl"/>
</dbReference>
<dbReference type="GO" id="GO:0030864">
    <property type="term" value="C:cortical actin cytoskeleton"/>
    <property type="evidence" value="ECO:0007669"/>
    <property type="project" value="Ensembl"/>
</dbReference>
<dbReference type="GO" id="GO:0031410">
    <property type="term" value="C:cytoplasmic vesicle"/>
    <property type="evidence" value="ECO:0000318"/>
    <property type="project" value="GO_Central"/>
</dbReference>
<dbReference type="GO" id="GO:0098691">
    <property type="term" value="C:dopaminergic synapse"/>
    <property type="evidence" value="ECO:0007669"/>
    <property type="project" value="Ensembl"/>
</dbReference>
<dbReference type="GO" id="GO:0005769">
    <property type="term" value="C:early endosome"/>
    <property type="evidence" value="ECO:0007669"/>
    <property type="project" value="Ensembl"/>
</dbReference>
<dbReference type="GO" id="GO:0005768">
    <property type="term" value="C:endosome"/>
    <property type="evidence" value="ECO:0000250"/>
    <property type="project" value="UniProtKB"/>
</dbReference>
<dbReference type="GO" id="GO:0009897">
    <property type="term" value="C:external side of plasma membrane"/>
    <property type="evidence" value="ECO:0007669"/>
    <property type="project" value="Ensembl"/>
</dbReference>
<dbReference type="GO" id="GO:0016600">
    <property type="term" value="C:flotillin complex"/>
    <property type="evidence" value="ECO:0000318"/>
    <property type="project" value="GO_Central"/>
</dbReference>
<dbReference type="GO" id="GO:0030027">
    <property type="term" value="C:lamellipodium"/>
    <property type="evidence" value="ECO:0007669"/>
    <property type="project" value="Ensembl"/>
</dbReference>
<dbReference type="GO" id="GO:0042470">
    <property type="term" value="C:melanosome"/>
    <property type="evidence" value="ECO:0007669"/>
    <property type="project" value="UniProtKB-SubCell"/>
</dbReference>
<dbReference type="GO" id="GO:0045121">
    <property type="term" value="C:membrane raft"/>
    <property type="evidence" value="ECO:0000250"/>
    <property type="project" value="UniProtKB"/>
</dbReference>
<dbReference type="GO" id="GO:0005886">
    <property type="term" value="C:plasma membrane"/>
    <property type="evidence" value="ECO:0000318"/>
    <property type="project" value="GO_Central"/>
</dbReference>
<dbReference type="GO" id="GO:0042383">
    <property type="term" value="C:sarcolemma"/>
    <property type="evidence" value="ECO:0007669"/>
    <property type="project" value="Ensembl"/>
</dbReference>
<dbReference type="GO" id="GO:0001931">
    <property type="term" value="C:uropod"/>
    <property type="evidence" value="ECO:0007669"/>
    <property type="project" value="Ensembl"/>
</dbReference>
<dbReference type="GO" id="GO:0002020">
    <property type="term" value="F:protease binding"/>
    <property type="evidence" value="ECO:0000318"/>
    <property type="project" value="GO_Central"/>
</dbReference>
<dbReference type="GO" id="GO:0007409">
    <property type="term" value="P:axonogenesis"/>
    <property type="evidence" value="ECO:0007669"/>
    <property type="project" value="Ensembl"/>
</dbReference>
<dbReference type="GO" id="GO:0071360">
    <property type="term" value="P:cellular response to exogenous dsRNA"/>
    <property type="evidence" value="ECO:0007669"/>
    <property type="project" value="Ensembl"/>
</dbReference>
<dbReference type="GO" id="GO:0033227">
    <property type="term" value="P:dsRNA transport"/>
    <property type="evidence" value="ECO:0007669"/>
    <property type="project" value="Ensembl"/>
</dbReference>
<dbReference type="GO" id="GO:0022617">
    <property type="term" value="P:extracellular matrix disassembly"/>
    <property type="evidence" value="ECO:0007669"/>
    <property type="project" value="Ensembl"/>
</dbReference>
<dbReference type="GO" id="GO:0035556">
    <property type="term" value="P:intracellular signal transduction"/>
    <property type="evidence" value="ECO:0007669"/>
    <property type="project" value="Ensembl"/>
</dbReference>
<dbReference type="GO" id="GO:0044854">
    <property type="term" value="P:plasma membrane raft assembly"/>
    <property type="evidence" value="ECO:0007669"/>
    <property type="project" value="Ensembl"/>
</dbReference>
<dbReference type="GO" id="GO:0043123">
    <property type="term" value="P:positive regulation of canonical NF-kappaB signal transduction"/>
    <property type="evidence" value="ECO:0007669"/>
    <property type="project" value="Ensembl"/>
</dbReference>
<dbReference type="GO" id="GO:1901890">
    <property type="term" value="P:positive regulation of cell junction assembly"/>
    <property type="evidence" value="ECO:0000318"/>
    <property type="project" value="GO_Central"/>
</dbReference>
<dbReference type="GO" id="GO:2000049">
    <property type="term" value="P:positive regulation of cell-cell adhesion mediated by cadherin"/>
    <property type="evidence" value="ECO:0000318"/>
    <property type="project" value="GO_Central"/>
</dbReference>
<dbReference type="GO" id="GO:0045807">
    <property type="term" value="P:positive regulation of endocytosis"/>
    <property type="evidence" value="ECO:0000318"/>
    <property type="project" value="GO_Central"/>
</dbReference>
<dbReference type="GO" id="GO:0034116">
    <property type="term" value="P:positive regulation of heterotypic cell-cell adhesion"/>
    <property type="evidence" value="ECO:0007669"/>
    <property type="project" value="Ensembl"/>
</dbReference>
<dbReference type="GO" id="GO:0032728">
    <property type="term" value="P:positive regulation of interferon-beta production"/>
    <property type="evidence" value="ECO:0007669"/>
    <property type="project" value="Ensembl"/>
</dbReference>
<dbReference type="GO" id="GO:1901741">
    <property type="term" value="P:positive regulation of myoblast fusion"/>
    <property type="evidence" value="ECO:0007669"/>
    <property type="project" value="Ensembl"/>
</dbReference>
<dbReference type="GO" id="GO:0048643">
    <property type="term" value="P:positive regulation of skeletal muscle tissue development"/>
    <property type="evidence" value="ECO:0007669"/>
    <property type="project" value="Ensembl"/>
</dbReference>
<dbReference type="GO" id="GO:0032226">
    <property type="term" value="P:positive regulation of synaptic transmission, dopaminergic"/>
    <property type="evidence" value="ECO:0007669"/>
    <property type="project" value="Ensembl"/>
</dbReference>
<dbReference type="GO" id="GO:0034141">
    <property type="term" value="P:positive regulation of toll-like receptor 3 signaling pathway"/>
    <property type="evidence" value="ECO:0007669"/>
    <property type="project" value="Ensembl"/>
</dbReference>
<dbReference type="GO" id="GO:0072659">
    <property type="term" value="P:protein localization to plasma membrane"/>
    <property type="evidence" value="ECO:0000318"/>
    <property type="project" value="GO_Central"/>
</dbReference>
<dbReference type="GO" id="GO:0050821">
    <property type="term" value="P:protein stabilization"/>
    <property type="evidence" value="ECO:0007669"/>
    <property type="project" value="Ensembl"/>
</dbReference>
<dbReference type="GO" id="GO:0051580">
    <property type="term" value="P:regulation of neurotransmitter uptake"/>
    <property type="evidence" value="ECO:0007669"/>
    <property type="project" value="Ensembl"/>
</dbReference>
<dbReference type="GO" id="GO:0002090">
    <property type="term" value="P:regulation of receptor internalization"/>
    <property type="evidence" value="ECO:0000318"/>
    <property type="project" value="GO_Central"/>
</dbReference>
<dbReference type="GO" id="GO:0035023">
    <property type="term" value="P:regulation of Rho protein signal transduction"/>
    <property type="evidence" value="ECO:0007669"/>
    <property type="project" value="Ensembl"/>
</dbReference>
<dbReference type="GO" id="GO:0034976">
    <property type="term" value="P:response to endoplasmic reticulum stress"/>
    <property type="evidence" value="ECO:0007669"/>
    <property type="project" value="Ensembl"/>
</dbReference>
<dbReference type="CDD" id="cd03399">
    <property type="entry name" value="SPFH_flotillin"/>
    <property type="match status" value="1"/>
</dbReference>
<dbReference type="FunFam" id="3.30.479.30:FF:000003">
    <property type="entry name" value="Flotillin 2"/>
    <property type="match status" value="1"/>
</dbReference>
<dbReference type="Gene3D" id="3.30.479.30">
    <property type="entry name" value="Band 7 domain"/>
    <property type="match status" value="1"/>
</dbReference>
<dbReference type="InterPro" id="IPR001107">
    <property type="entry name" value="Band_7"/>
</dbReference>
<dbReference type="InterPro" id="IPR036013">
    <property type="entry name" value="Band_7/SPFH_dom_sf"/>
</dbReference>
<dbReference type="InterPro" id="IPR031905">
    <property type="entry name" value="Flotillin_C"/>
</dbReference>
<dbReference type="InterPro" id="IPR027705">
    <property type="entry name" value="Flotillin_fam"/>
</dbReference>
<dbReference type="PANTHER" id="PTHR13806:SF46">
    <property type="entry name" value="FLOTILLIN-1-RELATED"/>
    <property type="match status" value="1"/>
</dbReference>
<dbReference type="PANTHER" id="PTHR13806">
    <property type="entry name" value="FLOTILLIN-RELATED"/>
    <property type="match status" value="1"/>
</dbReference>
<dbReference type="Pfam" id="PF01145">
    <property type="entry name" value="Band_7"/>
    <property type="match status" value="1"/>
</dbReference>
<dbReference type="Pfam" id="PF15975">
    <property type="entry name" value="Flot"/>
    <property type="match status" value="1"/>
</dbReference>
<dbReference type="SMART" id="SM00244">
    <property type="entry name" value="PHB"/>
    <property type="match status" value="1"/>
</dbReference>
<dbReference type="SUPFAM" id="SSF117892">
    <property type="entry name" value="Band 7/SPFH domain"/>
    <property type="match status" value="1"/>
</dbReference>
<sequence length="427" mass="47413">MFFTCGPNEAMVVSGFCRSPPVMVAGGRVFVLPCIQQIQRISLNTLTLNVKSEKVYTRHGVPISVTGIAQVKIQGQNKEMLAAACQMFLGKTEAEIAHIALETLEGHQRAIMAHMTVEEIYKDRQKFSEQVFKVASSDLVNMGISVVSYTLKDIHDDQDYLHSLGKARTAQVQKDARIGEAEAKRDAGIREAKAKQEKVSAQYLSEIEMAKAQRDYELKKAAYDIEVNTRRAQADLAYQLQVAKTKQQIEEQRVQVQVVERAQQVAVQEQEIARREKELEARVRKPAEAERYKLERLAEAEKSQLIMQAEAEAESVRMRGEAEAFAIGARARAEAEQMAKKAEAFQLYQEAAQLDMLLEKLPQVAEEISGPLTSANKITLVSSGSGTMGAAKVTGEVLDILTRLPESVERLTGVSISQVNHKPLRTA</sequence>
<proteinExistence type="inferred from homology"/>
<name>FLOT1_PANTR</name>